<organism>
    <name type="scientific">Geobacter sulfurreducens (strain ATCC 51573 / DSM 12127 / PCA)</name>
    <dbReference type="NCBI Taxonomy" id="243231"/>
    <lineage>
        <taxon>Bacteria</taxon>
        <taxon>Pseudomonadati</taxon>
        <taxon>Thermodesulfobacteriota</taxon>
        <taxon>Desulfuromonadia</taxon>
        <taxon>Geobacterales</taxon>
        <taxon>Geobacteraceae</taxon>
        <taxon>Geobacter</taxon>
    </lineage>
</organism>
<gene>
    <name evidence="1" type="primary">rpsO</name>
    <name type="ordered locus">GSU1592</name>
</gene>
<comment type="function">
    <text evidence="1">One of the primary rRNA binding proteins, it binds directly to 16S rRNA where it helps nucleate assembly of the platform of the 30S subunit by binding and bridging several RNA helices of the 16S rRNA.</text>
</comment>
<comment type="function">
    <text evidence="1">Forms an intersubunit bridge (bridge B4) with the 23S rRNA of the 50S subunit in the ribosome.</text>
</comment>
<comment type="subunit">
    <text evidence="1">Part of the 30S ribosomal subunit. Forms a bridge to the 50S subunit in the 70S ribosome, contacting the 23S rRNA.</text>
</comment>
<comment type="similarity">
    <text evidence="1">Belongs to the universal ribosomal protein uS15 family.</text>
</comment>
<keyword id="KW-1185">Reference proteome</keyword>
<keyword id="KW-0687">Ribonucleoprotein</keyword>
<keyword id="KW-0689">Ribosomal protein</keyword>
<keyword id="KW-0694">RNA-binding</keyword>
<keyword id="KW-0699">rRNA-binding</keyword>
<evidence type="ECO:0000255" key="1">
    <source>
        <dbReference type="HAMAP-Rule" id="MF_01343"/>
    </source>
</evidence>
<evidence type="ECO:0000305" key="2"/>
<proteinExistence type="inferred from homology"/>
<feature type="chain" id="PRO_0000115443" description="Small ribosomal subunit protein uS15">
    <location>
        <begin position="1"/>
        <end position="88"/>
    </location>
</feature>
<dbReference type="EMBL" id="AE017180">
    <property type="protein sequence ID" value="AAR34966.1"/>
    <property type="molecule type" value="Genomic_DNA"/>
</dbReference>
<dbReference type="RefSeq" id="NP_952643.1">
    <property type="nucleotide sequence ID" value="NC_002939.5"/>
</dbReference>
<dbReference type="RefSeq" id="WP_010942237.1">
    <property type="nucleotide sequence ID" value="NC_002939.5"/>
</dbReference>
<dbReference type="SMR" id="Q74CT0"/>
<dbReference type="FunCoup" id="Q74CT0">
    <property type="interactions" value="534"/>
</dbReference>
<dbReference type="STRING" id="243231.GSU1592"/>
<dbReference type="EnsemblBacteria" id="AAR34966">
    <property type="protein sequence ID" value="AAR34966"/>
    <property type="gene ID" value="GSU1592"/>
</dbReference>
<dbReference type="KEGG" id="gsu:GSU1592"/>
<dbReference type="PATRIC" id="fig|243231.5.peg.1633"/>
<dbReference type="eggNOG" id="COG0184">
    <property type="taxonomic scope" value="Bacteria"/>
</dbReference>
<dbReference type="HOGENOM" id="CLU_148518_0_0_7"/>
<dbReference type="InParanoid" id="Q74CT0"/>
<dbReference type="OrthoDB" id="9799262at2"/>
<dbReference type="Proteomes" id="UP000000577">
    <property type="component" value="Chromosome"/>
</dbReference>
<dbReference type="GO" id="GO:0022627">
    <property type="term" value="C:cytosolic small ribosomal subunit"/>
    <property type="evidence" value="ECO:0000318"/>
    <property type="project" value="GO_Central"/>
</dbReference>
<dbReference type="GO" id="GO:0019843">
    <property type="term" value="F:rRNA binding"/>
    <property type="evidence" value="ECO:0007669"/>
    <property type="project" value="UniProtKB-UniRule"/>
</dbReference>
<dbReference type="GO" id="GO:0003735">
    <property type="term" value="F:structural constituent of ribosome"/>
    <property type="evidence" value="ECO:0007669"/>
    <property type="project" value="InterPro"/>
</dbReference>
<dbReference type="GO" id="GO:0006412">
    <property type="term" value="P:translation"/>
    <property type="evidence" value="ECO:0007669"/>
    <property type="project" value="UniProtKB-UniRule"/>
</dbReference>
<dbReference type="CDD" id="cd00353">
    <property type="entry name" value="Ribosomal_S15p_S13e"/>
    <property type="match status" value="1"/>
</dbReference>
<dbReference type="FunFam" id="1.10.287.10:FF:000002">
    <property type="entry name" value="30S ribosomal protein S15"/>
    <property type="match status" value="1"/>
</dbReference>
<dbReference type="Gene3D" id="6.10.250.3130">
    <property type="match status" value="1"/>
</dbReference>
<dbReference type="Gene3D" id="1.10.287.10">
    <property type="entry name" value="S15/NS1, RNA-binding"/>
    <property type="match status" value="1"/>
</dbReference>
<dbReference type="HAMAP" id="MF_01343_B">
    <property type="entry name" value="Ribosomal_uS15_B"/>
    <property type="match status" value="1"/>
</dbReference>
<dbReference type="InterPro" id="IPR000589">
    <property type="entry name" value="Ribosomal_uS15"/>
</dbReference>
<dbReference type="InterPro" id="IPR005290">
    <property type="entry name" value="Ribosomal_uS15_bac-type"/>
</dbReference>
<dbReference type="InterPro" id="IPR009068">
    <property type="entry name" value="uS15_NS1_RNA-bd_sf"/>
</dbReference>
<dbReference type="NCBIfam" id="TIGR00952">
    <property type="entry name" value="S15_bact"/>
    <property type="match status" value="1"/>
</dbReference>
<dbReference type="PANTHER" id="PTHR23321">
    <property type="entry name" value="RIBOSOMAL PROTEIN S15, BACTERIAL AND ORGANELLAR"/>
    <property type="match status" value="1"/>
</dbReference>
<dbReference type="PANTHER" id="PTHR23321:SF26">
    <property type="entry name" value="SMALL RIBOSOMAL SUBUNIT PROTEIN US15M"/>
    <property type="match status" value="1"/>
</dbReference>
<dbReference type="Pfam" id="PF00312">
    <property type="entry name" value="Ribosomal_S15"/>
    <property type="match status" value="1"/>
</dbReference>
<dbReference type="SMART" id="SM01387">
    <property type="entry name" value="Ribosomal_S15"/>
    <property type="match status" value="1"/>
</dbReference>
<dbReference type="SUPFAM" id="SSF47060">
    <property type="entry name" value="S15/NS1 RNA-binding domain"/>
    <property type="match status" value="1"/>
</dbReference>
<dbReference type="PROSITE" id="PS00362">
    <property type="entry name" value="RIBOSOMAL_S15"/>
    <property type="match status" value="1"/>
</dbReference>
<accession>Q74CT0</accession>
<name>RS15_GEOSL</name>
<reference key="1">
    <citation type="journal article" date="2003" name="Science">
        <title>Genome of Geobacter sulfurreducens: metal reduction in subsurface environments.</title>
        <authorList>
            <person name="Methe B.A."/>
            <person name="Nelson K.E."/>
            <person name="Eisen J.A."/>
            <person name="Paulsen I.T."/>
            <person name="Nelson W.C."/>
            <person name="Heidelberg J.F."/>
            <person name="Wu D."/>
            <person name="Wu M."/>
            <person name="Ward N.L."/>
            <person name="Beanan M.J."/>
            <person name="Dodson R.J."/>
            <person name="Madupu R."/>
            <person name="Brinkac L.M."/>
            <person name="Daugherty S.C."/>
            <person name="DeBoy R.T."/>
            <person name="Durkin A.S."/>
            <person name="Gwinn M.L."/>
            <person name="Kolonay J.F."/>
            <person name="Sullivan S.A."/>
            <person name="Haft D.H."/>
            <person name="Selengut J."/>
            <person name="Davidsen T.M."/>
            <person name="Zafar N."/>
            <person name="White O."/>
            <person name="Tran B."/>
            <person name="Romero C."/>
            <person name="Forberger H.A."/>
            <person name="Weidman J.F."/>
            <person name="Khouri H.M."/>
            <person name="Feldblyum T.V."/>
            <person name="Utterback T.R."/>
            <person name="Van Aken S.E."/>
            <person name="Lovley D.R."/>
            <person name="Fraser C.M."/>
        </authorList>
    </citation>
    <scope>NUCLEOTIDE SEQUENCE [LARGE SCALE GENOMIC DNA]</scope>
    <source>
        <strain>ATCC 51573 / DSM 12127 / PCA</strain>
    </source>
</reference>
<sequence>MLVTDKKKEIITTHKLHDSDTGSPEVQIALLTERIIYLTEHFKVHKKDHHSRRGLLKIVGQRRRLLDYLKKKDVERYRSIIEKLGIRR</sequence>
<protein>
    <recommendedName>
        <fullName evidence="1">Small ribosomal subunit protein uS15</fullName>
    </recommendedName>
    <alternativeName>
        <fullName evidence="2">30S ribosomal protein S15</fullName>
    </alternativeName>
</protein>